<keyword id="KW-0028">Amino-acid biosynthesis</keyword>
<keyword id="KW-0057">Aromatic amino acid biosynthesis</keyword>
<keyword id="KW-0456">Lyase</keyword>
<keyword id="KW-0663">Pyridoxal phosphate</keyword>
<keyword id="KW-0822">Tryptophan biosynthesis</keyword>
<evidence type="ECO:0000255" key="1">
    <source>
        <dbReference type="HAMAP-Rule" id="MF_00133"/>
    </source>
</evidence>
<comment type="function">
    <text evidence="1">The beta subunit is responsible for the synthesis of L-tryptophan from indole and L-serine.</text>
</comment>
<comment type="catalytic activity">
    <reaction evidence="1">
        <text>(1S,2R)-1-C-(indol-3-yl)glycerol 3-phosphate + L-serine = D-glyceraldehyde 3-phosphate + L-tryptophan + H2O</text>
        <dbReference type="Rhea" id="RHEA:10532"/>
        <dbReference type="ChEBI" id="CHEBI:15377"/>
        <dbReference type="ChEBI" id="CHEBI:33384"/>
        <dbReference type="ChEBI" id="CHEBI:57912"/>
        <dbReference type="ChEBI" id="CHEBI:58866"/>
        <dbReference type="ChEBI" id="CHEBI:59776"/>
        <dbReference type="EC" id="4.2.1.20"/>
    </reaction>
</comment>
<comment type="cofactor">
    <cofactor evidence="1">
        <name>pyridoxal 5'-phosphate</name>
        <dbReference type="ChEBI" id="CHEBI:597326"/>
    </cofactor>
</comment>
<comment type="pathway">
    <text evidence="1">Amino-acid biosynthesis; L-tryptophan biosynthesis; L-tryptophan from chorismate: step 5/5.</text>
</comment>
<comment type="subunit">
    <text evidence="1">Tetramer of two alpha and two beta chains.</text>
</comment>
<comment type="similarity">
    <text evidence="1">Belongs to the TrpB family.</text>
</comment>
<feature type="chain" id="PRO_0000098998" description="Tryptophan synthase beta chain">
    <location>
        <begin position="1"/>
        <end position="404"/>
    </location>
</feature>
<feature type="modified residue" description="N6-(pyridoxal phosphate)lysine" evidence="1">
    <location>
        <position position="94"/>
    </location>
</feature>
<name>TRPB_STAAM</name>
<sequence>MNKQIQTEADELGFFGEYGGQYVPETLMPAIIELKKAYKEAKADPEFQRELEYYLSEYVGRATPLTYAASYTESLGGAKIYLKREDLNHTGAHKINNALGQALLAKRMGKKKLVAETGAGQHGVASATVAALFDMELVVFMGSEDIKRQQLNVFRMELLGAKVVAVEEGQGTLSDAVNKALQYWVSHVDDTHYLLGSALGPDPFPTIVRDFQSVIGKEIKSQILKKEGRLPDAIVACIGGGSNAIGTFYPFIKDDVALYGVEAAGQGEDTDKHALAIGKGSPGVLHGTKMYLIQDEGGQVQLAHSISAGLDYPGIGPEHSYYHDIGRVTFENASDTQAMNALINFTKHEGIIPAIESAHALSYVERLAPTMSKEDIIVVTISGRGDKDMETIRQYMAERGLAND</sequence>
<reference key="1">
    <citation type="journal article" date="2001" name="Lancet">
        <title>Whole genome sequencing of meticillin-resistant Staphylococcus aureus.</title>
        <authorList>
            <person name="Kuroda M."/>
            <person name="Ohta T."/>
            <person name="Uchiyama I."/>
            <person name="Baba T."/>
            <person name="Yuzawa H."/>
            <person name="Kobayashi I."/>
            <person name="Cui L."/>
            <person name="Oguchi A."/>
            <person name="Aoki K."/>
            <person name="Nagai Y."/>
            <person name="Lian J.-Q."/>
            <person name="Ito T."/>
            <person name="Kanamori M."/>
            <person name="Matsumaru H."/>
            <person name="Maruyama A."/>
            <person name="Murakami H."/>
            <person name="Hosoyama A."/>
            <person name="Mizutani-Ui Y."/>
            <person name="Takahashi N.K."/>
            <person name="Sawano T."/>
            <person name="Inoue R."/>
            <person name="Kaito C."/>
            <person name="Sekimizu K."/>
            <person name="Hirakawa H."/>
            <person name="Kuhara S."/>
            <person name="Goto S."/>
            <person name="Yabuzaki J."/>
            <person name="Kanehisa M."/>
            <person name="Yamashita A."/>
            <person name="Oshima K."/>
            <person name="Furuya K."/>
            <person name="Yoshino C."/>
            <person name="Shiba T."/>
            <person name="Hattori M."/>
            <person name="Ogasawara N."/>
            <person name="Hayashi H."/>
            <person name="Hiramatsu K."/>
        </authorList>
    </citation>
    <scope>NUCLEOTIDE SEQUENCE [LARGE SCALE GENOMIC DNA]</scope>
    <source>
        <strain>Mu50 / ATCC 700699</strain>
    </source>
</reference>
<gene>
    <name evidence="1" type="primary">trpB</name>
    <name type="ordered locus">SAV1372</name>
</gene>
<protein>
    <recommendedName>
        <fullName evidence="1">Tryptophan synthase beta chain</fullName>
        <ecNumber evidence="1">4.2.1.20</ecNumber>
    </recommendedName>
</protein>
<dbReference type="EC" id="4.2.1.20" evidence="1"/>
<dbReference type="EMBL" id="BA000017">
    <property type="protein sequence ID" value="BAB57534.1"/>
    <property type="molecule type" value="Genomic_DNA"/>
</dbReference>
<dbReference type="RefSeq" id="WP_001041351.1">
    <property type="nucleotide sequence ID" value="NC_002758.2"/>
</dbReference>
<dbReference type="SMR" id="P66986"/>
<dbReference type="KEGG" id="sav:SAV1372"/>
<dbReference type="HOGENOM" id="CLU_016734_3_1_9"/>
<dbReference type="PhylomeDB" id="P66986"/>
<dbReference type="UniPathway" id="UPA00035">
    <property type="reaction ID" value="UER00044"/>
</dbReference>
<dbReference type="Proteomes" id="UP000002481">
    <property type="component" value="Chromosome"/>
</dbReference>
<dbReference type="GO" id="GO:0005737">
    <property type="term" value="C:cytoplasm"/>
    <property type="evidence" value="ECO:0007669"/>
    <property type="project" value="TreeGrafter"/>
</dbReference>
<dbReference type="GO" id="GO:0004834">
    <property type="term" value="F:tryptophan synthase activity"/>
    <property type="evidence" value="ECO:0007669"/>
    <property type="project" value="UniProtKB-UniRule"/>
</dbReference>
<dbReference type="CDD" id="cd06446">
    <property type="entry name" value="Trp-synth_B"/>
    <property type="match status" value="1"/>
</dbReference>
<dbReference type="FunFam" id="3.40.50.1100:FF:000001">
    <property type="entry name" value="Tryptophan synthase beta chain"/>
    <property type="match status" value="1"/>
</dbReference>
<dbReference type="FunFam" id="3.40.50.1100:FF:000004">
    <property type="entry name" value="Tryptophan synthase beta chain"/>
    <property type="match status" value="1"/>
</dbReference>
<dbReference type="Gene3D" id="3.40.50.1100">
    <property type="match status" value="2"/>
</dbReference>
<dbReference type="HAMAP" id="MF_00133">
    <property type="entry name" value="Trp_synth_beta"/>
    <property type="match status" value="1"/>
</dbReference>
<dbReference type="InterPro" id="IPR006653">
    <property type="entry name" value="Trp_synth_b_CS"/>
</dbReference>
<dbReference type="InterPro" id="IPR006654">
    <property type="entry name" value="Trp_synth_beta"/>
</dbReference>
<dbReference type="InterPro" id="IPR023026">
    <property type="entry name" value="Trp_synth_beta/beta-like"/>
</dbReference>
<dbReference type="InterPro" id="IPR001926">
    <property type="entry name" value="TrpB-like_PALP"/>
</dbReference>
<dbReference type="InterPro" id="IPR036052">
    <property type="entry name" value="TrpB-like_PALP_sf"/>
</dbReference>
<dbReference type="NCBIfam" id="TIGR00263">
    <property type="entry name" value="trpB"/>
    <property type="match status" value="1"/>
</dbReference>
<dbReference type="PANTHER" id="PTHR48077:SF3">
    <property type="entry name" value="TRYPTOPHAN SYNTHASE"/>
    <property type="match status" value="1"/>
</dbReference>
<dbReference type="PANTHER" id="PTHR48077">
    <property type="entry name" value="TRYPTOPHAN SYNTHASE-RELATED"/>
    <property type="match status" value="1"/>
</dbReference>
<dbReference type="Pfam" id="PF00291">
    <property type="entry name" value="PALP"/>
    <property type="match status" value="1"/>
</dbReference>
<dbReference type="PIRSF" id="PIRSF001413">
    <property type="entry name" value="Trp_syn_beta"/>
    <property type="match status" value="1"/>
</dbReference>
<dbReference type="SUPFAM" id="SSF53686">
    <property type="entry name" value="Tryptophan synthase beta subunit-like PLP-dependent enzymes"/>
    <property type="match status" value="1"/>
</dbReference>
<dbReference type="PROSITE" id="PS00168">
    <property type="entry name" value="TRP_SYNTHASE_BETA"/>
    <property type="match status" value="1"/>
</dbReference>
<accession>P66986</accession>
<accession>Q99UA9</accession>
<organism>
    <name type="scientific">Staphylococcus aureus (strain Mu50 / ATCC 700699)</name>
    <dbReference type="NCBI Taxonomy" id="158878"/>
    <lineage>
        <taxon>Bacteria</taxon>
        <taxon>Bacillati</taxon>
        <taxon>Bacillota</taxon>
        <taxon>Bacilli</taxon>
        <taxon>Bacillales</taxon>
        <taxon>Staphylococcaceae</taxon>
        <taxon>Staphylococcus</taxon>
    </lineage>
</organism>
<proteinExistence type="inferred from homology"/>